<gene>
    <name evidence="1" type="primary">eutC</name>
    <name type="ordered locus">CPF_0892</name>
</gene>
<keyword id="KW-1283">Bacterial microcompartment</keyword>
<keyword id="KW-0846">Cobalamin</keyword>
<keyword id="KW-0170">Cobalt</keyword>
<keyword id="KW-0456">Lyase</keyword>
<organism>
    <name type="scientific">Clostridium perfringens (strain ATCC 13124 / DSM 756 / JCM 1290 / NCIMB 6125 / NCTC 8237 / Type A)</name>
    <dbReference type="NCBI Taxonomy" id="195103"/>
    <lineage>
        <taxon>Bacteria</taxon>
        <taxon>Bacillati</taxon>
        <taxon>Bacillota</taxon>
        <taxon>Clostridia</taxon>
        <taxon>Eubacteriales</taxon>
        <taxon>Clostridiaceae</taxon>
        <taxon>Clostridium</taxon>
    </lineage>
</organism>
<protein>
    <recommendedName>
        <fullName evidence="1">Ethanolamine ammonia-lyase small subunit</fullName>
        <shortName evidence="1">EAL small subunit</shortName>
        <ecNumber evidence="1">4.3.1.7</ecNumber>
    </recommendedName>
</protein>
<evidence type="ECO:0000255" key="1">
    <source>
        <dbReference type="HAMAP-Rule" id="MF_00601"/>
    </source>
</evidence>
<reference key="1">
    <citation type="journal article" date="2006" name="Genome Res.">
        <title>Skewed genomic variability in strains of the toxigenic bacterial pathogen, Clostridium perfringens.</title>
        <authorList>
            <person name="Myers G.S.A."/>
            <person name="Rasko D.A."/>
            <person name="Cheung J.K."/>
            <person name="Ravel J."/>
            <person name="Seshadri R."/>
            <person name="DeBoy R.T."/>
            <person name="Ren Q."/>
            <person name="Varga J."/>
            <person name="Awad M.M."/>
            <person name="Brinkac L.M."/>
            <person name="Daugherty S.C."/>
            <person name="Haft D.H."/>
            <person name="Dodson R.J."/>
            <person name="Madupu R."/>
            <person name="Nelson W.C."/>
            <person name="Rosovitz M.J."/>
            <person name="Sullivan S.A."/>
            <person name="Khouri H."/>
            <person name="Dimitrov G.I."/>
            <person name="Watkins K.L."/>
            <person name="Mulligan S."/>
            <person name="Benton J."/>
            <person name="Radune D."/>
            <person name="Fisher D.J."/>
            <person name="Atkins H.S."/>
            <person name="Hiscox T."/>
            <person name="Jost B.H."/>
            <person name="Billington S.J."/>
            <person name="Songer J.G."/>
            <person name="McClane B.A."/>
            <person name="Titball R.W."/>
            <person name="Rood J.I."/>
            <person name="Melville S.B."/>
            <person name="Paulsen I.T."/>
        </authorList>
    </citation>
    <scope>NUCLEOTIDE SEQUENCE [LARGE SCALE GENOMIC DNA]</scope>
    <source>
        <strain>ATCC 13124 / DSM 756 / JCM 1290 / NCIMB 6125 / NCTC 8237 / S 107 / Type A</strain>
    </source>
</reference>
<feature type="chain" id="PRO_1000025852" description="Ethanolamine ammonia-lyase small subunit">
    <location>
        <begin position="1"/>
        <end position="295"/>
    </location>
</feature>
<feature type="binding site" evidence="1">
    <location>
        <position position="209"/>
    </location>
    <ligand>
        <name>adenosylcob(III)alamin</name>
        <dbReference type="ChEBI" id="CHEBI:18408"/>
    </ligand>
</feature>
<feature type="binding site" evidence="1">
    <location>
        <position position="230"/>
    </location>
    <ligand>
        <name>adenosylcob(III)alamin</name>
        <dbReference type="ChEBI" id="CHEBI:18408"/>
    </ligand>
</feature>
<accession>Q0TSP9</accession>
<dbReference type="EC" id="4.3.1.7" evidence="1"/>
<dbReference type="EMBL" id="CP000246">
    <property type="protein sequence ID" value="ABG82727.1"/>
    <property type="molecule type" value="Genomic_DNA"/>
</dbReference>
<dbReference type="RefSeq" id="WP_003454028.1">
    <property type="nucleotide sequence ID" value="NC_008261.1"/>
</dbReference>
<dbReference type="SMR" id="Q0TSP9"/>
<dbReference type="STRING" id="195103.CPF_0892"/>
<dbReference type="PaxDb" id="195103-CPF_0892"/>
<dbReference type="GeneID" id="93002776"/>
<dbReference type="KEGG" id="cpf:CPF_0892"/>
<dbReference type="eggNOG" id="COG4302">
    <property type="taxonomic scope" value="Bacteria"/>
</dbReference>
<dbReference type="HOGENOM" id="CLU_068224_0_0_9"/>
<dbReference type="UniPathway" id="UPA00560"/>
<dbReference type="Proteomes" id="UP000001823">
    <property type="component" value="Chromosome"/>
</dbReference>
<dbReference type="GO" id="GO:0009350">
    <property type="term" value="C:ethanolamine ammonia-lyase complex"/>
    <property type="evidence" value="ECO:0007669"/>
    <property type="project" value="UniProtKB-UniRule"/>
</dbReference>
<dbReference type="GO" id="GO:0031471">
    <property type="term" value="C:ethanolamine degradation polyhedral organelle"/>
    <property type="evidence" value="ECO:0007669"/>
    <property type="project" value="UniProtKB-UniRule"/>
</dbReference>
<dbReference type="GO" id="GO:0031419">
    <property type="term" value="F:cobalamin binding"/>
    <property type="evidence" value="ECO:0007669"/>
    <property type="project" value="UniProtKB-UniRule"/>
</dbReference>
<dbReference type="GO" id="GO:0008851">
    <property type="term" value="F:ethanolamine ammonia-lyase activity"/>
    <property type="evidence" value="ECO:0007669"/>
    <property type="project" value="UniProtKB-UniRule"/>
</dbReference>
<dbReference type="GO" id="GO:0006520">
    <property type="term" value="P:amino acid metabolic process"/>
    <property type="evidence" value="ECO:0007669"/>
    <property type="project" value="InterPro"/>
</dbReference>
<dbReference type="GO" id="GO:0046336">
    <property type="term" value="P:ethanolamine catabolic process"/>
    <property type="evidence" value="ECO:0007669"/>
    <property type="project" value="UniProtKB-UniRule"/>
</dbReference>
<dbReference type="FunFam" id="1.10.30.40:FF:000001">
    <property type="entry name" value="Ethanolamine ammonia-lyase light chain"/>
    <property type="match status" value="1"/>
</dbReference>
<dbReference type="FunFam" id="3.40.50.11240:FF:000001">
    <property type="entry name" value="Ethanolamine ammonia-lyase light chain"/>
    <property type="match status" value="1"/>
</dbReference>
<dbReference type="Gene3D" id="3.40.50.11240">
    <property type="entry name" value="Ethanolamine ammonia-lyase light chain (EutC)"/>
    <property type="match status" value="1"/>
</dbReference>
<dbReference type="Gene3D" id="1.10.30.40">
    <property type="entry name" value="Ethanolamine ammonia-lyase light chain (EutC), N-terminal domain"/>
    <property type="match status" value="1"/>
</dbReference>
<dbReference type="HAMAP" id="MF_00601">
    <property type="entry name" value="EutC"/>
    <property type="match status" value="1"/>
</dbReference>
<dbReference type="InterPro" id="IPR009246">
    <property type="entry name" value="EutC"/>
</dbReference>
<dbReference type="InterPro" id="IPR042251">
    <property type="entry name" value="EutC_C"/>
</dbReference>
<dbReference type="InterPro" id="IPR042255">
    <property type="entry name" value="EutC_N"/>
</dbReference>
<dbReference type="NCBIfam" id="NF003971">
    <property type="entry name" value="PRK05465.1"/>
    <property type="match status" value="1"/>
</dbReference>
<dbReference type="PANTHER" id="PTHR39330">
    <property type="entry name" value="ETHANOLAMINE AMMONIA-LYASE LIGHT CHAIN"/>
    <property type="match status" value="1"/>
</dbReference>
<dbReference type="PANTHER" id="PTHR39330:SF1">
    <property type="entry name" value="ETHANOLAMINE AMMONIA-LYASE SMALL SUBUNIT"/>
    <property type="match status" value="1"/>
</dbReference>
<dbReference type="Pfam" id="PF05985">
    <property type="entry name" value="EutC"/>
    <property type="match status" value="1"/>
</dbReference>
<dbReference type="PIRSF" id="PIRSF018982">
    <property type="entry name" value="EutC"/>
    <property type="match status" value="1"/>
</dbReference>
<comment type="function">
    <text evidence="1">Catalyzes the deamination of various vicinal amino-alcohols to oxo compounds. Allows this organism to utilize ethanolamine as the sole source of nitrogen and carbon in the presence of external vitamin B12.</text>
</comment>
<comment type="catalytic activity">
    <reaction evidence="1">
        <text>ethanolamine = acetaldehyde + NH4(+)</text>
        <dbReference type="Rhea" id="RHEA:15313"/>
        <dbReference type="ChEBI" id="CHEBI:15343"/>
        <dbReference type="ChEBI" id="CHEBI:28938"/>
        <dbReference type="ChEBI" id="CHEBI:57603"/>
        <dbReference type="EC" id="4.3.1.7"/>
    </reaction>
</comment>
<comment type="cofactor">
    <cofactor evidence="1">
        <name>adenosylcob(III)alamin</name>
        <dbReference type="ChEBI" id="CHEBI:18408"/>
    </cofactor>
    <text evidence="1">Binds between the large and small subunits.</text>
</comment>
<comment type="pathway">
    <text evidence="1">Amine and polyamine degradation; ethanolamine degradation.</text>
</comment>
<comment type="subunit">
    <text evidence="1">The basic unit is a heterodimer which dimerizes to form tetramers. The heterotetramers trimerize; 6 large subunits form a core ring with 6 small subunits projecting outwards.</text>
</comment>
<comment type="subcellular location">
    <subcellularLocation>
        <location evidence="1">Bacterial microcompartment</location>
    </subcellularLocation>
</comment>
<comment type="similarity">
    <text evidence="1">Belongs to the EutC family.</text>
</comment>
<name>EUTC_CLOP1</name>
<sequence>MNEKDLKLMVEQLVSQMVGQVDMQSVEKVVKEVSKNQSQVESDEFIPDITEIDIKKQLLVDNPADREAYLEMKAKTPARLGSGRAGARYKTITALRMRADHAAAQDSVFSDVSEEFIKKNNFIPVKTMCTDKDEYVTRPDLGRRFSPETTEIIKEKCDKNPKVQIMVGDGLSSAAIEANVEDILPSIEQGLKMYGLNVGPILFVKYCRVPAMDAVGEATGADVVCLLVGERPGLVTAESMSAYIAYKPKVGMPEAKRTVISNIHKGGTTAVEAGAHIAELIKTMLDKKASGIDLK</sequence>
<proteinExistence type="inferred from homology"/>